<keyword id="KW-0028">Amino-acid biosynthesis</keyword>
<keyword id="KW-0413">Isomerase</keyword>
<keyword id="KW-0486">Methionine biosynthesis</keyword>
<comment type="function">
    <text evidence="1">Catalyzes the interconversion of methylthioribose-1-phosphate (MTR-1-P) into methylthioribulose-1-phosphate (MTRu-1-P).</text>
</comment>
<comment type="catalytic activity">
    <reaction evidence="1">
        <text>5-(methylsulfanyl)-alpha-D-ribose 1-phosphate = 5-(methylsulfanyl)-D-ribulose 1-phosphate</text>
        <dbReference type="Rhea" id="RHEA:19989"/>
        <dbReference type="ChEBI" id="CHEBI:58533"/>
        <dbReference type="ChEBI" id="CHEBI:58548"/>
        <dbReference type="EC" id="5.3.1.23"/>
    </reaction>
</comment>
<comment type="pathway">
    <text evidence="1">Amino-acid biosynthesis; L-methionine biosynthesis via salvage pathway; L-methionine from S-methyl-5-thio-alpha-D-ribose 1-phosphate: step 1/6.</text>
</comment>
<comment type="similarity">
    <text evidence="2">Belongs to the eIF-2B alpha/beta/delta subunits family. MtnA subfamily.</text>
</comment>
<evidence type="ECO:0000255" key="1">
    <source>
        <dbReference type="HAMAP-Rule" id="MF_01678"/>
    </source>
</evidence>
<evidence type="ECO:0000305" key="2"/>
<proteinExistence type="inferred from homology"/>
<organism>
    <name type="scientific">Dehalococcoides mccartyi (strain ATCC BAA-2266 / KCTC 15142 / 195)</name>
    <name type="common">Dehalococcoides ethenogenes (strain 195)</name>
    <dbReference type="NCBI Taxonomy" id="243164"/>
    <lineage>
        <taxon>Bacteria</taxon>
        <taxon>Bacillati</taxon>
        <taxon>Chloroflexota</taxon>
        <taxon>Dehalococcoidia</taxon>
        <taxon>Dehalococcoidales</taxon>
        <taxon>Dehalococcoidaceae</taxon>
        <taxon>Dehalococcoides</taxon>
    </lineage>
</organism>
<gene>
    <name evidence="1" type="primary">mtnA</name>
    <name type="ordered locus">DET0518</name>
</gene>
<accession>Q3Z937</accession>
<protein>
    <recommendedName>
        <fullName evidence="1">Methylthioribose-1-phosphate isomerase</fullName>
        <shortName evidence="1">M1Pi</shortName>
        <shortName evidence="1">MTR-1-P isomerase</shortName>
        <ecNumber evidence="1">5.3.1.23</ecNumber>
    </recommendedName>
    <alternativeName>
        <fullName evidence="1">S-methyl-5-thioribose-1-phosphate isomerase</fullName>
    </alternativeName>
</protein>
<sequence length="334" mass="35978">MKAIEWRDNRLIILDQTLLPLEEKYLELNDYHAVAEAIKTLRVRGAPSIGVAAAYGIALGALGIETQYCSEFLPLYQQVSAEIASTRPTAKNLFMAAERMDHVVASGTDVSQVKISLVEEAVKIHHEEEEASRKISAFGAELIQPGWTVLTHCNAGPLATAGYGTALGVIIAAHQQGKNISAFATETRPLLQGARLTALELKEAGIPFKLITDSMAGHFMQKGVINAVVVGADRIAKNGDTANKIGTYSLAVLALAHGIPFYVAAPSSTFDKSIESGRDIVIEERKPEEITQIRGQRIAPENIAVANPAFDVTPANLITAFITENGIIRREAKN</sequence>
<reference key="1">
    <citation type="journal article" date="2005" name="Science">
        <title>Genome sequence of the PCE-dechlorinating bacterium Dehalococcoides ethenogenes.</title>
        <authorList>
            <person name="Seshadri R."/>
            <person name="Adrian L."/>
            <person name="Fouts D.E."/>
            <person name="Eisen J.A."/>
            <person name="Phillippy A.M."/>
            <person name="Methe B.A."/>
            <person name="Ward N.L."/>
            <person name="Nelson W.C."/>
            <person name="DeBoy R.T."/>
            <person name="Khouri H.M."/>
            <person name="Kolonay J.F."/>
            <person name="Dodson R.J."/>
            <person name="Daugherty S.C."/>
            <person name="Brinkac L.M."/>
            <person name="Sullivan S.A."/>
            <person name="Madupu R."/>
            <person name="Nelson K.E."/>
            <person name="Kang K.H."/>
            <person name="Impraim M."/>
            <person name="Tran K."/>
            <person name="Robinson J.M."/>
            <person name="Forberger H.A."/>
            <person name="Fraser C.M."/>
            <person name="Zinder S.H."/>
            <person name="Heidelberg J.F."/>
        </authorList>
    </citation>
    <scope>NUCLEOTIDE SEQUENCE [LARGE SCALE GENOMIC DNA]</scope>
    <source>
        <strain>ATCC BAA-2266 / KCTC 15142 / 195</strain>
    </source>
</reference>
<feature type="chain" id="PRO_0000357171" description="Methylthioribose-1-phosphate isomerase">
    <location>
        <begin position="1"/>
        <end position="334"/>
    </location>
</feature>
<feature type="active site" description="Proton donor" evidence="1">
    <location>
        <position position="233"/>
    </location>
</feature>
<feature type="binding site" evidence="1">
    <location>
        <begin position="44"/>
        <end position="46"/>
    </location>
    <ligand>
        <name>substrate</name>
    </ligand>
</feature>
<feature type="binding site" evidence="1">
    <location>
        <position position="87"/>
    </location>
    <ligand>
        <name>substrate</name>
    </ligand>
</feature>
<feature type="binding site" evidence="1">
    <location>
        <position position="192"/>
    </location>
    <ligand>
        <name>substrate</name>
    </ligand>
</feature>
<feature type="binding site" evidence="1">
    <location>
        <begin position="243"/>
        <end position="244"/>
    </location>
    <ligand>
        <name>substrate</name>
    </ligand>
</feature>
<feature type="site" description="Transition state stabilizer" evidence="1">
    <location>
        <position position="153"/>
    </location>
</feature>
<name>MTNA_DEHM1</name>
<dbReference type="EC" id="5.3.1.23" evidence="1"/>
<dbReference type="EMBL" id="CP000027">
    <property type="protein sequence ID" value="AAW40225.1"/>
    <property type="molecule type" value="Genomic_DNA"/>
</dbReference>
<dbReference type="RefSeq" id="WP_010936295.1">
    <property type="nucleotide sequence ID" value="NC_002936.3"/>
</dbReference>
<dbReference type="SMR" id="Q3Z937"/>
<dbReference type="FunCoup" id="Q3Z937">
    <property type="interactions" value="291"/>
</dbReference>
<dbReference type="STRING" id="243164.DET0518"/>
<dbReference type="GeneID" id="3230189"/>
<dbReference type="KEGG" id="det:DET0518"/>
<dbReference type="eggNOG" id="COG0182">
    <property type="taxonomic scope" value="Bacteria"/>
</dbReference>
<dbReference type="HOGENOM" id="CLU_016218_1_2_0"/>
<dbReference type="InParanoid" id="Q3Z937"/>
<dbReference type="UniPathway" id="UPA00904">
    <property type="reaction ID" value="UER00874"/>
</dbReference>
<dbReference type="Proteomes" id="UP000008289">
    <property type="component" value="Chromosome"/>
</dbReference>
<dbReference type="GO" id="GO:0046523">
    <property type="term" value="F:S-methyl-5-thioribose-1-phosphate isomerase activity"/>
    <property type="evidence" value="ECO:0007669"/>
    <property type="project" value="UniProtKB-UniRule"/>
</dbReference>
<dbReference type="GO" id="GO:0019509">
    <property type="term" value="P:L-methionine salvage from methylthioadenosine"/>
    <property type="evidence" value="ECO:0007669"/>
    <property type="project" value="UniProtKB-UniRule"/>
</dbReference>
<dbReference type="FunFam" id="1.20.120.420:FF:000003">
    <property type="entry name" value="Methylthioribose-1-phosphate isomerase"/>
    <property type="match status" value="1"/>
</dbReference>
<dbReference type="FunFam" id="3.40.50.10470:FF:000006">
    <property type="entry name" value="Methylthioribose-1-phosphate isomerase"/>
    <property type="match status" value="1"/>
</dbReference>
<dbReference type="Gene3D" id="1.20.120.420">
    <property type="entry name" value="translation initiation factor eif-2b, domain 1"/>
    <property type="match status" value="1"/>
</dbReference>
<dbReference type="Gene3D" id="3.40.50.10470">
    <property type="entry name" value="Translation initiation factor eif-2b, domain 2"/>
    <property type="match status" value="1"/>
</dbReference>
<dbReference type="HAMAP" id="MF_01678">
    <property type="entry name" value="Salvage_MtnA"/>
    <property type="match status" value="1"/>
</dbReference>
<dbReference type="InterPro" id="IPR000649">
    <property type="entry name" value="IF-2B-related"/>
</dbReference>
<dbReference type="InterPro" id="IPR005251">
    <property type="entry name" value="IF-M1Pi"/>
</dbReference>
<dbReference type="InterPro" id="IPR042529">
    <property type="entry name" value="IF_2B-like_C"/>
</dbReference>
<dbReference type="InterPro" id="IPR011559">
    <property type="entry name" value="Initiation_fac_2B_a/b/d"/>
</dbReference>
<dbReference type="InterPro" id="IPR027363">
    <property type="entry name" value="M1Pi_N"/>
</dbReference>
<dbReference type="InterPro" id="IPR037171">
    <property type="entry name" value="NagB/RpiA_transferase-like"/>
</dbReference>
<dbReference type="NCBIfam" id="TIGR00524">
    <property type="entry name" value="eIF-2B_rel"/>
    <property type="match status" value="1"/>
</dbReference>
<dbReference type="NCBIfam" id="NF004326">
    <property type="entry name" value="PRK05720.1"/>
    <property type="match status" value="1"/>
</dbReference>
<dbReference type="NCBIfam" id="TIGR00512">
    <property type="entry name" value="salvage_mtnA"/>
    <property type="match status" value="1"/>
</dbReference>
<dbReference type="PANTHER" id="PTHR43475">
    <property type="entry name" value="METHYLTHIORIBOSE-1-PHOSPHATE ISOMERASE"/>
    <property type="match status" value="1"/>
</dbReference>
<dbReference type="PANTHER" id="PTHR43475:SF1">
    <property type="entry name" value="METHYLTHIORIBOSE-1-PHOSPHATE ISOMERASE"/>
    <property type="match status" value="1"/>
</dbReference>
<dbReference type="Pfam" id="PF01008">
    <property type="entry name" value="IF-2B"/>
    <property type="match status" value="1"/>
</dbReference>
<dbReference type="SUPFAM" id="SSF100950">
    <property type="entry name" value="NagB/RpiA/CoA transferase-like"/>
    <property type="match status" value="1"/>
</dbReference>